<sequence length="309" mass="35917">MEEILKTLPQHTCSWLKHKIIMYKYQDFWTSKQLLEGTLMAQQSFKAEPSDVFLCSAPKTGTTWLKALAFAIVTRENFDESTSPLLKKLVHECVPFLERQVEEIEHNRESSSLPLVATHLPYASLPESVIASNCRMVYIYRNIKDVIVSNYHFLREAFKLSMEDAPFEETFEDFYNGNSSYGPYWDHILGYRKASLDMPDKILFLKYEDLKSEPISNVKRLAEFIGYPFSNDEEKAGVIENIINMCSFENLSSLEVNKTRKPKGGMLENRLYYRKGQDGDWKNYFTNEMKEKIDKIMDEKLSGTGLILK</sequence>
<comment type="subcellular location">
    <subcellularLocation>
        <location evidence="2">Cytoplasm</location>
    </subcellularLocation>
</comment>
<comment type="similarity">
    <text evidence="2">Belongs to the sulfotransferase 1 family.</text>
</comment>
<reference key="1">
    <citation type="journal article" date="1995" name="Plant Physiol.">
        <title>Flavonol sulfotransferase-like cDNA clone from Flaveria bidentis.</title>
        <authorList>
            <person name="Ananvoranich S."/>
            <person name="Gulick P."/>
            <person name="Ibrahim R.K."/>
        </authorList>
    </citation>
    <scope>NUCLEOTIDE SEQUENCE [MRNA]</scope>
</reference>
<proteinExistence type="evidence at transcript level"/>
<feature type="chain" id="PRO_0000085180" description="Flavonol sulfotransferase-like">
    <location>
        <begin position="1"/>
        <end position="309"/>
    </location>
</feature>
<feature type="active site" description="Proton acceptor" evidence="1">
    <location>
        <position position="119"/>
    </location>
</feature>
<feature type="binding site" evidence="1">
    <location>
        <begin position="59"/>
        <end position="64"/>
    </location>
    <ligand>
        <name>3'-phosphoadenylyl sulfate</name>
        <dbReference type="ChEBI" id="CHEBI:58339"/>
    </ligand>
</feature>
<feature type="binding site" evidence="1">
    <location>
        <position position="141"/>
    </location>
    <ligand>
        <name>3'-phosphoadenylyl sulfate</name>
        <dbReference type="ChEBI" id="CHEBI:58339"/>
    </ligand>
</feature>
<feature type="binding site" evidence="1">
    <location>
        <position position="149"/>
    </location>
    <ligand>
        <name>3'-phosphoadenylyl sulfate</name>
        <dbReference type="ChEBI" id="CHEBI:58339"/>
    </ligand>
</feature>
<feature type="binding site" evidence="1">
    <location>
        <position position="207"/>
    </location>
    <ligand>
        <name>3'-phosphoadenylyl sulfate</name>
        <dbReference type="ChEBI" id="CHEBI:58339"/>
    </ligand>
</feature>
<feature type="binding site" evidence="1">
    <location>
        <begin position="274"/>
        <end position="276"/>
    </location>
    <ligand>
        <name>3'-phosphoadenylyl sulfate</name>
        <dbReference type="ChEBI" id="CHEBI:58339"/>
    </ligand>
</feature>
<accession>P52838</accession>
<dbReference type="EC" id="2.8.2.-"/>
<dbReference type="EMBL" id="U10277">
    <property type="protein sequence ID" value="AAA87399.1"/>
    <property type="molecule type" value="mRNA"/>
</dbReference>
<dbReference type="SMR" id="P52838"/>
<dbReference type="GO" id="GO:0005737">
    <property type="term" value="C:cytoplasm"/>
    <property type="evidence" value="ECO:0007669"/>
    <property type="project" value="UniProtKB-SubCell"/>
</dbReference>
<dbReference type="GO" id="GO:0008146">
    <property type="term" value="F:sulfotransferase activity"/>
    <property type="evidence" value="ECO:0007669"/>
    <property type="project" value="InterPro"/>
</dbReference>
<dbReference type="Gene3D" id="3.40.50.300">
    <property type="entry name" value="P-loop containing nucleotide triphosphate hydrolases"/>
    <property type="match status" value="1"/>
</dbReference>
<dbReference type="InterPro" id="IPR027417">
    <property type="entry name" value="P-loop_NTPase"/>
</dbReference>
<dbReference type="InterPro" id="IPR000863">
    <property type="entry name" value="Sulfotransferase_dom"/>
</dbReference>
<dbReference type="PANTHER" id="PTHR11783">
    <property type="entry name" value="SULFOTRANSFERASE SULT"/>
    <property type="match status" value="1"/>
</dbReference>
<dbReference type="Pfam" id="PF00685">
    <property type="entry name" value="Sulfotransfer_1"/>
    <property type="match status" value="1"/>
</dbReference>
<dbReference type="SUPFAM" id="SSF52540">
    <property type="entry name" value="P-loop containing nucleoside triphosphate hydrolases"/>
    <property type="match status" value="1"/>
</dbReference>
<evidence type="ECO:0000250" key="1"/>
<evidence type="ECO:0000305" key="2"/>
<organism>
    <name type="scientific">Flaveria bidentis</name>
    <name type="common">Coastal plain yellowtops</name>
    <name type="synonym">Ethulia bidentis</name>
    <dbReference type="NCBI Taxonomy" id="4224"/>
    <lineage>
        <taxon>Eukaryota</taxon>
        <taxon>Viridiplantae</taxon>
        <taxon>Streptophyta</taxon>
        <taxon>Embryophyta</taxon>
        <taxon>Tracheophyta</taxon>
        <taxon>Spermatophyta</taxon>
        <taxon>Magnoliopsida</taxon>
        <taxon>eudicotyledons</taxon>
        <taxon>Gunneridae</taxon>
        <taxon>Pentapetalae</taxon>
        <taxon>asterids</taxon>
        <taxon>campanulids</taxon>
        <taxon>Asterales</taxon>
        <taxon>Asteraceae</taxon>
        <taxon>Asteroideae</taxon>
        <taxon>Heliantheae alliance</taxon>
        <taxon>Tageteae</taxon>
        <taxon>Flaveria</taxon>
    </lineage>
</organism>
<protein>
    <recommendedName>
        <fullName>Flavonol sulfotransferase-like</fullName>
        <ecNumber>2.8.2.-</ecNumber>
    </recommendedName>
</protein>
<keyword id="KW-0963">Cytoplasm</keyword>
<keyword id="KW-0808">Transferase</keyword>
<name>FSTL_FLABI</name>